<keyword id="KW-1185">Reference proteome</keyword>
<keyword id="KW-0677">Repeat</keyword>
<protein>
    <recommendedName>
        <fullName>WAG22 antigen</fullName>
    </recommendedName>
</protein>
<gene>
    <name type="primary">wag22</name>
    <name type="synonym">wag22a</name>
    <name type="synonym">wag22b</name>
    <name type="ordered locus">BQ2027_MB1789C/BQ2027_MB1790C</name>
</gene>
<evidence type="ECO:0000255" key="1"/>
<evidence type="ECO:0000256" key="2">
    <source>
        <dbReference type="SAM" id="MobiDB-lite"/>
    </source>
</evidence>
<evidence type="ECO:0000305" key="3"/>
<comment type="similarity">
    <text evidence="3">Belongs to the mycobacterial PE family. PGRS subfamily.</text>
</comment>
<comment type="sequence caution" evidence="3">
    <conflict type="frameshift">
        <sequence resource="EMBL-CDS" id="SIU00392"/>
    </conflict>
</comment>
<comment type="sequence caution" evidence="3">
    <conflict type="frameshift">
        <sequence resource="EMBL-CDS" id="SIU00393"/>
    </conflict>
</comment>
<feature type="chain" id="PRO_0000023573" description="WAG22 antigen">
    <location>
        <begin position="1"/>
        <end position="914"/>
    </location>
</feature>
<feature type="domain" description="PE" evidence="1">
    <location>
        <begin position="1"/>
        <end position="93"/>
    </location>
</feature>
<feature type="region of interest" description="Disordered" evidence="2">
    <location>
        <begin position="412"/>
        <end position="431"/>
    </location>
</feature>
<feature type="region of interest" description="Disordered" evidence="2">
    <location>
        <begin position="895"/>
        <end position="914"/>
    </location>
</feature>
<feature type="compositionally biased region" description="Gly residues" evidence="2">
    <location>
        <begin position="895"/>
        <end position="904"/>
    </location>
</feature>
<accession>P0A687</accession>
<accession>A0A1R3XZ80</accession>
<accession>A0A1R3Y1D5</accession>
<accession>O06794</accession>
<accession>X2BID9</accession>
<name>WA22_MYCBO</name>
<dbReference type="EMBL" id="LT708304">
    <property type="protein sequence ID" value="SIU00392.1"/>
    <property type="status" value="ALT_FRAME"/>
    <property type="molecule type" value="Genomic_DNA"/>
</dbReference>
<dbReference type="EMBL" id="LT708304">
    <property type="protein sequence ID" value="SIU00393.1"/>
    <property type="status" value="ALT_FRAME"/>
    <property type="molecule type" value="Genomic_DNA"/>
</dbReference>
<dbReference type="RefSeq" id="NP_855441.1">
    <property type="nucleotide sequence ID" value="NC_002945.3"/>
</dbReference>
<dbReference type="RefSeq" id="NP_855442.1">
    <property type="nucleotide sequence ID" value="NC_002945.3"/>
</dbReference>
<dbReference type="KEGG" id="mbo:BQ2027_MB1789C"/>
<dbReference type="KEGG" id="mbo:BQ2027_MB1790C"/>
<dbReference type="PATRIC" id="fig|233413.5.peg.1957"/>
<dbReference type="Proteomes" id="UP000001419">
    <property type="component" value="Chromosome"/>
</dbReference>
<dbReference type="FunFam" id="1.10.287.850:FF:000001">
    <property type="entry name" value="PE_PGRS39"/>
    <property type="match status" value="1"/>
</dbReference>
<dbReference type="Gene3D" id="1.10.287.850">
    <property type="entry name" value="HP0062-like domain"/>
    <property type="match status" value="1"/>
</dbReference>
<dbReference type="InterPro" id="IPR000084">
    <property type="entry name" value="PE-PGRS_N"/>
</dbReference>
<dbReference type="InterPro" id="IPR048996">
    <property type="entry name" value="PGRS_rpt"/>
</dbReference>
<dbReference type="Pfam" id="PF00934">
    <property type="entry name" value="PE"/>
    <property type="match status" value="1"/>
</dbReference>
<dbReference type="Pfam" id="PF21526">
    <property type="entry name" value="PGRS"/>
    <property type="match status" value="1"/>
</dbReference>
<dbReference type="SUPFAM" id="SSF140459">
    <property type="entry name" value="PE/PPE dimer-like"/>
    <property type="match status" value="1"/>
</dbReference>
<sequence>MSFVIAVPETIAAAATDLADLGSTIAGANAAAAANTTSLLAAGADEISAAIAALFGAHGRAYQAASAEAAAFHGRFVQALTTGGGAYAAAEAAAVTPLLNSINAPVLAATGRPLIGNGANGAPGTGANGGDAGWLIGNGGAGGSGAKGANGGAGGPGGAAGLFGNGGAGGAGGTATANNGIGGAGGAGGSAMLFGAGGAGGAGGAATSLVGGIGGTGGTGGNAGMLAGAAGAGGAGGFSFSTAGGAGGAGGAGGLFTTGGVGGAGGQGHTGGAGGAGGAGGLFGAGGMGGAGGFGDHGTLGTGGAGGDGGGGGLFGAGGDGGAGGSGLTTGGAAGNGGNAGTLSLGAAGGAGGTGGAGGTVFGGGKGGAGGAGGNAGMLFGSGGGGGTGGFGFAAGGQGGVGGSAGMLSGSGGSGGAGGSGGPAGTAAGGAGGAGGAPGLIGNGGNGGNGGESGGTGGVGGAGGNAVLIGNGGEGGIGALAGKSGFGGFGGLLLGADGYNAPESTSPWHNLQQDILSFINEPTEALTGRPLIGNGDSGTPGTGDDGGAGGWLFGNGGNGGAGAAGTNGSAGGAGGAGGILFGTGGAGGAGGVGTAGAGGAGGAGGSAFLIGSGGTGGVGGAATTTGGVGGAGGNAGLLIGAAGLGGCGGGAFTAGVTTGGAGGTGGAAGLFANGGAGGAGGTGSTAGGAGGAGGAGGLYAHGGTGGPGGNGGSTGAGGTGGAGGPGGLYGAGGSGGAGGHGGMAGGGGGVGGNAGSLTLNASGGAGGSGGSSLSGKAGAGGAGGSAGLFYGSGGAGGNGGYSLNGTGGDGGTGGAGQITGLRSGFGGAGGAGGASDTGAGGNGGAGGKAGLYGNGGDGGAGGDGATSGKGGAGGNAVVIGNGGNGGNAGKAGGTAGAGGAGGLVLGRDGQHGLT</sequence>
<reference key="1">
    <citation type="journal article" date="2003" name="Proc. Natl. Acad. Sci. U.S.A.">
        <title>The complete genome sequence of Mycobacterium bovis.</title>
        <authorList>
            <person name="Garnier T."/>
            <person name="Eiglmeier K."/>
            <person name="Camus J.-C."/>
            <person name="Medina N."/>
            <person name="Mansoor H."/>
            <person name="Pryor M."/>
            <person name="Duthoy S."/>
            <person name="Grondin S."/>
            <person name="Lacroix C."/>
            <person name="Monsempe C."/>
            <person name="Simon S."/>
            <person name="Harris B."/>
            <person name="Atkin R."/>
            <person name="Doggett J."/>
            <person name="Mayes R."/>
            <person name="Keating L."/>
            <person name="Wheeler P.R."/>
            <person name="Parkhill J."/>
            <person name="Barrell B.G."/>
            <person name="Cole S.T."/>
            <person name="Gordon S.V."/>
            <person name="Hewinson R.G."/>
        </authorList>
    </citation>
    <scope>NUCLEOTIDE SEQUENCE [LARGE SCALE GENOMIC DNA]</scope>
    <source>
        <strain>ATCC BAA-935 / AF2122/97</strain>
    </source>
</reference>
<reference key="2">
    <citation type="journal article" date="2017" name="Genome Announc.">
        <title>Updated reference genome sequence and annotation of Mycobacterium bovis AF2122/97.</title>
        <authorList>
            <person name="Malone K.M."/>
            <person name="Farrell D."/>
            <person name="Stuber T.P."/>
            <person name="Schubert O.T."/>
            <person name="Aebersold R."/>
            <person name="Robbe-Austerman S."/>
            <person name="Gordon S.V."/>
        </authorList>
    </citation>
    <scope>NUCLEOTIDE SEQUENCE [LARGE SCALE GENOMIC DNA]</scope>
    <scope>GENOME REANNOTATION</scope>
    <source>
        <strain>ATCC BAA-935 / AF2122/97</strain>
    </source>
</reference>
<proteinExistence type="inferred from homology"/>
<organism>
    <name type="scientific">Mycobacterium bovis (strain ATCC BAA-935 / AF2122/97)</name>
    <dbReference type="NCBI Taxonomy" id="233413"/>
    <lineage>
        <taxon>Bacteria</taxon>
        <taxon>Bacillati</taxon>
        <taxon>Actinomycetota</taxon>
        <taxon>Actinomycetes</taxon>
        <taxon>Mycobacteriales</taxon>
        <taxon>Mycobacteriaceae</taxon>
        <taxon>Mycobacterium</taxon>
        <taxon>Mycobacterium tuberculosis complex</taxon>
    </lineage>
</organism>